<dbReference type="EMBL" id="AL078620">
    <property type="protein sequence ID" value="CAB44691.1"/>
    <property type="status" value="ALT_SEQ"/>
    <property type="molecule type" value="Genomic_DNA"/>
</dbReference>
<dbReference type="EMBL" id="AL161595">
    <property type="protein sequence ID" value="CAB80619.1"/>
    <property type="status" value="ALT_SEQ"/>
    <property type="molecule type" value="Genomic_DNA"/>
</dbReference>
<dbReference type="EMBL" id="CP002687">
    <property type="protein sequence ID" value="AEE87087.1"/>
    <property type="molecule type" value="Genomic_DNA"/>
</dbReference>
<dbReference type="EMBL" id="CP002687">
    <property type="protein sequence ID" value="AEE87088.1"/>
    <property type="molecule type" value="Genomic_DNA"/>
</dbReference>
<dbReference type="EMBL" id="AK176780">
    <property type="protein sequence ID" value="BAD44543.1"/>
    <property type="molecule type" value="mRNA"/>
</dbReference>
<dbReference type="EMBL" id="BT029469">
    <property type="protein sequence ID" value="ABK59698.1"/>
    <property type="molecule type" value="mRNA"/>
</dbReference>
<dbReference type="PIR" id="T09372">
    <property type="entry name" value="T09372"/>
</dbReference>
<dbReference type="RefSeq" id="NP_195666.2">
    <property type="nucleotide sequence ID" value="NM_120116.4"/>
</dbReference>
<dbReference type="RefSeq" id="NP_974716.1">
    <property type="nucleotide sequence ID" value="NM_202987.3"/>
</dbReference>
<dbReference type="SMR" id="Q67XN8"/>
<dbReference type="FunCoup" id="Q67XN8">
    <property type="interactions" value="7"/>
</dbReference>
<dbReference type="PaxDb" id="3702-AT4G39560.1"/>
<dbReference type="EnsemblPlants" id="AT4G39560.1">
    <property type="protein sequence ID" value="AT4G39560.1"/>
    <property type="gene ID" value="AT4G39560"/>
</dbReference>
<dbReference type="EnsemblPlants" id="AT4G39560.2">
    <property type="protein sequence ID" value="AT4G39560.2"/>
    <property type="gene ID" value="AT4G39560"/>
</dbReference>
<dbReference type="GeneID" id="830110"/>
<dbReference type="Gramene" id="AT4G39560.1">
    <property type="protein sequence ID" value="AT4G39560.1"/>
    <property type="gene ID" value="AT4G39560"/>
</dbReference>
<dbReference type="Gramene" id="AT4G39560.2">
    <property type="protein sequence ID" value="AT4G39560.2"/>
    <property type="gene ID" value="AT4G39560"/>
</dbReference>
<dbReference type="KEGG" id="ath:AT4G39560"/>
<dbReference type="Araport" id="AT4G39560"/>
<dbReference type="TAIR" id="AT4G39560"/>
<dbReference type="eggNOG" id="KOG1072">
    <property type="taxonomic scope" value="Eukaryota"/>
</dbReference>
<dbReference type="HOGENOM" id="CLU_032521_2_0_1"/>
<dbReference type="InParanoid" id="Q67XN8"/>
<dbReference type="OMA" id="LCQKPKK"/>
<dbReference type="PhylomeDB" id="Q67XN8"/>
<dbReference type="PRO" id="PR:Q67XN8"/>
<dbReference type="Proteomes" id="UP000006548">
    <property type="component" value="Chromosome 4"/>
</dbReference>
<dbReference type="ExpressionAtlas" id="Q67XN8">
    <property type="expression patterns" value="baseline and differential"/>
</dbReference>
<dbReference type="CDD" id="cd22152">
    <property type="entry name" value="F-box_AtAFR-like"/>
    <property type="match status" value="1"/>
</dbReference>
<dbReference type="Gene3D" id="2.120.10.80">
    <property type="entry name" value="Kelch-type beta propeller"/>
    <property type="match status" value="1"/>
</dbReference>
<dbReference type="InterPro" id="IPR036047">
    <property type="entry name" value="F-box-like_dom_sf"/>
</dbReference>
<dbReference type="InterPro" id="IPR050354">
    <property type="entry name" value="F-box/kelch-repeat_ARATH"/>
</dbReference>
<dbReference type="InterPro" id="IPR001810">
    <property type="entry name" value="F-box_dom"/>
</dbReference>
<dbReference type="InterPro" id="IPR015915">
    <property type="entry name" value="Kelch-typ_b-propeller"/>
</dbReference>
<dbReference type="InterPro" id="IPR006652">
    <property type="entry name" value="Kelch_1"/>
</dbReference>
<dbReference type="PANTHER" id="PTHR24414">
    <property type="entry name" value="F-BOX/KELCH-REPEAT PROTEIN SKIP4"/>
    <property type="match status" value="1"/>
</dbReference>
<dbReference type="PANTHER" id="PTHR24414:SF184">
    <property type="entry name" value="GALACTOSE OXIDASE_KELCH REPEAT SUPERFAMILY PROTEIN"/>
    <property type="match status" value="1"/>
</dbReference>
<dbReference type="Pfam" id="PF00646">
    <property type="entry name" value="F-box"/>
    <property type="match status" value="1"/>
</dbReference>
<dbReference type="Pfam" id="PF25210">
    <property type="entry name" value="Kelch_FKB95"/>
    <property type="match status" value="1"/>
</dbReference>
<dbReference type="SMART" id="SM00256">
    <property type="entry name" value="FBOX"/>
    <property type="match status" value="1"/>
</dbReference>
<dbReference type="SMART" id="SM00612">
    <property type="entry name" value="Kelch"/>
    <property type="match status" value="2"/>
</dbReference>
<dbReference type="SUPFAM" id="SSF81383">
    <property type="entry name" value="F-box domain"/>
    <property type="match status" value="1"/>
</dbReference>
<dbReference type="SUPFAM" id="SSF117281">
    <property type="entry name" value="Kelch motif"/>
    <property type="match status" value="1"/>
</dbReference>
<dbReference type="PROSITE" id="PS00018">
    <property type="entry name" value="EF_HAND_1"/>
    <property type="match status" value="1"/>
</dbReference>
<dbReference type="PROSITE" id="PS50181">
    <property type="entry name" value="FBOX"/>
    <property type="match status" value="1"/>
</dbReference>
<protein>
    <recommendedName>
        <fullName>F-box/kelch-repeat protein At4g39560</fullName>
    </recommendedName>
</protein>
<organism>
    <name type="scientific">Arabidopsis thaliana</name>
    <name type="common">Mouse-ear cress</name>
    <dbReference type="NCBI Taxonomy" id="3702"/>
    <lineage>
        <taxon>Eukaryota</taxon>
        <taxon>Viridiplantae</taxon>
        <taxon>Streptophyta</taxon>
        <taxon>Embryophyta</taxon>
        <taxon>Tracheophyta</taxon>
        <taxon>Spermatophyta</taxon>
        <taxon>Magnoliopsida</taxon>
        <taxon>eudicotyledons</taxon>
        <taxon>Gunneridae</taxon>
        <taxon>Pentapetalae</taxon>
        <taxon>rosids</taxon>
        <taxon>malvids</taxon>
        <taxon>Brassicales</taxon>
        <taxon>Brassicaceae</taxon>
        <taxon>Camelineae</taxon>
        <taxon>Arabidopsis</taxon>
    </lineage>
</organism>
<reference key="1">
    <citation type="journal article" date="1999" name="Nature">
        <title>Sequence and analysis of chromosome 4 of the plant Arabidopsis thaliana.</title>
        <authorList>
            <person name="Mayer K.F.X."/>
            <person name="Schueller C."/>
            <person name="Wambutt R."/>
            <person name="Murphy G."/>
            <person name="Volckaert G."/>
            <person name="Pohl T."/>
            <person name="Duesterhoeft A."/>
            <person name="Stiekema W."/>
            <person name="Entian K.-D."/>
            <person name="Terryn N."/>
            <person name="Harris B."/>
            <person name="Ansorge W."/>
            <person name="Brandt P."/>
            <person name="Grivell L.A."/>
            <person name="Rieger M."/>
            <person name="Weichselgartner M."/>
            <person name="de Simone V."/>
            <person name="Obermaier B."/>
            <person name="Mache R."/>
            <person name="Mueller M."/>
            <person name="Kreis M."/>
            <person name="Delseny M."/>
            <person name="Puigdomenech P."/>
            <person name="Watson M."/>
            <person name="Schmidtheini T."/>
            <person name="Reichert B."/>
            <person name="Portetelle D."/>
            <person name="Perez-Alonso M."/>
            <person name="Boutry M."/>
            <person name="Bancroft I."/>
            <person name="Vos P."/>
            <person name="Hoheisel J."/>
            <person name="Zimmermann W."/>
            <person name="Wedler H."/>
            <person name="Ridley P."/>
            <person name="Langham S.-A."/>
            <person name="McCullagh B."/>
            <person name="Bilham L."/>
            <person name="Robben J."/>
            <person name="van der Schueren J."/>
            <person name="Grymonprez B."/>
            <person name="Chuang Y.-J."/>
            <person name="Vandenbussche F."/>
            <person name="Braeken M."/>
            <person name="Weltjens I."/>
            <person name="Voet M."/>
            <person name="Bastiaens I."/>
            <person name="Aert R."/>
            <person name="Defoor E."/>
            <person name="Weitzenegger T."/>
            <person name="Bothe G."/>
            <person name="Ramsperger U."/>
            <person name="Hilbert H."/>
            <person name="Braun M."/>
            <person name="Holzer E."/>
            <person name="Brandt A."/>
            <person name="Peters S."/>
            <person name="van Staveren M."/>
            <person name="Dirkse W."/>
            <person name="Mooijman P."/>
            <person name="Klein Lankhorst R."/>
            <person name="Rose M."/>
            <person name="Hauf J."/>
            <person name="Koetter P."/>
            <person name="Berneiser S."/>
            <person name="Hempel S."/>
            <person name="Feldpausch M."/>
            <person name="Lamberth S."/>
            <person name="Van den Daele H."/>
            <person name="De Keyser A."/>
            <person name="Buysshaert C."/>
            <person name="Gielen J."/>
            <person name="Villarroel R."/>
            <person name="De Clercq R."/>
            <person name="van Montagu M."/>
            <person name="Rogers J."/>
            <person name="Cronin A."/>
            <person name="Quail M.A."/>
            <person name="Bray-Allen S."/>
            <person name="Clark L."/>
            <person name="Doggett J."/>
            <person name="Hall S."/>
            <person name="Kay M."/>
            <person name="Lennard N."/>
            <person name="McLay K."/>
            <person name="Mayes R."/>
            <person name="Pettett A."/>
            <person name="Rajandream M.A."/>
            <person name="Lyne M."/>
            <person name="Benes V."/>
            <person name="Rechmann S."/>
            <person name="Borkova D."/>
            <person name="Bloecker H."/>
            <person name="Scharfe M."/>
            <person name="Grimm M."/>
            <person name="Loehnert T.-H."/>
            <person name="Dose S."/>
            <person name="de Haan M."/>
            <person name="Maarse A.C."/>
            <person name="Schaefer M."/>
            <person name="Mueller-Auer S."/>
            <person name="Gabel C."/>
            <person name="Fuchs M."/>
            <person name="Fartmann B."/>
            <person name="Granderath K."/>
            <person name="Dauner D."/>
            <person name="Herzl A."/>
            <person name="Neumann S."/>
            <person name="Argiriou A."/>
            <person name="Vitale D."/>
            <person name="Liguori R."/>
            <person name="Piravandi E."/>
            <person name="Massenet O."/>
            <person name="Quigley F."/>
            <person name="Clabauld G."/>
            <person name="Muendlein A."/>
            <person name="Felber R."/>
            <person name="Schnabl S."/>
            <person name="Hiller R."/>
            <person name="Schmidt W."/>
            <person name="Lecharny A."/>
            <person name="Aubourg S."/>
            <person name="Chefdor F."/>
            <person name="Cooke R."/>
            <person name="Berger C."/>
            <person name="Monfort A."/>
            <person name="Casacuberta E."/>
            <person name="Gibbons T."/>
            <person name="Weber N."/>
            <person name="Vandenbol M."/>
            <person name="Bargues M."/>
            <person name="Terol J."/>
            <person name="Torres A."/>
            <person name="Perez-Perez A."/>
            <person name="Purnelle B."/>
            <person name="Bent E."/>
            <person name="Johnson S."/>
            <person name="Tacon D."/>
            <person name="Jesse T."/>
            <person name="Heijnen L."/>
            <person name="Schwarz S."/>
            <person name="Scholler P."/>
            <person name="Heber S."/>
            <person name="Francs P."/>
            <person name="Bielke C."/>
            <person name="Frishman D."/>
            <person name="Haase D."/>
            <person name="Lemcke K."/>
            <person name="Mewes H.-W."/>
            <person name="Stocker S."/>
            <person name="Zaccaria P."/>
            <person name="Bevan M."/>
            <person name="Wilson R.K."/>
            <person name="de la Bastide M."/>
            <person name="Habermann K."/>
            <person name="Parnell L."/>
            <person name="Dedhia N."/>
            <person name="Gnoj L."/>
            <person name="Schutz K."/>
            <person name="Huang E."/>
            <person name="Spiegel L."/>
            <person name="Sekhon M."/>
            <person name="Murray J."/>
            <person name="Sheet P."/>
            <person name="Cordes M."/>
            <person name="Abu-Threideh J."/>
            <person name="Stoneking T."/>
            <person name="Kalicki J."/>
            <person name="Graves T."/>
            <person name="Harmon G."/>
            <person name="Edwards J."/>
            <person name="Latreille P."/>
            <person name="Courtney L."/>
            <person name="Cloud J."/>
            <person name="Abbott A."/>
            <person name="Scott K."/>
            <person name="Johnson D."/>
            <person name="Minx P."/>
            <person name="Bentley D."/>
            <person name="Fulton B."/>
            <person name="Miller N."/>
            <person name="Greco T."/>
            <person name="Kemp K."/>
            <person name="Kramer J."/>
            <person name="Fulton L."/>
            <person name="Mardis E."/>
            <person name="Dante M."/>
            <person name="Pepin K."/>
            <person name="Hillier L.W."/>
            <person name="Nelson J."/>
            <person name="Spieth J."/>
            <person name="Ryan E."/>
            <person name="Andrews S."/>
            <person name="Geisel C."/>
            <person name="Layman D."/>
            <person name="Du H."/>
            <person name="Ali J."/>
            <person name="Berghoff A."/>
            <person name="Jones K."/>
            <person name="Drone K."/>
            <person name="Cotton M."/>
            <person name="Joshu C."/>
            <person name="Antonoiu B."/>
            <person name="Zidanic M."/>
            <person name="Strong C."/>
            <person name="Sun H."/>
            <person name="Lamar B."/>
            <person name="Yordan C."/>
            <person name="Ma P."/>
            <person name="Zhong J."/>
            <person name="Preston R."/>
            <person name="Vil D."/>
            <person name="Shekher M."/>
            <person name="Matero A."/>
            <person name="Shah R."/>
            <person name="Swaby I.K."/>
            <person name="O'Shaughnessy A."/>
            <person name="Rodriguez M."/>
            <person name="Hoffman J."/>
            <person name="Till S."/>
            <person name="Granat S."/>
            <person name="Shohdy N."/>
            <person name="Hasegawa A."/>
            <person name="Hameed A."/>
            <person name="Lodhi M."/>
            <person name="Johnson A."/>
            <person name="Chen E."/>
            <person name="Marra M.A."/>
            <person name="Martienssen R."/>
            <person name="McCombie W.R."/>
        </authorList>
    </citation>
    <scope>NUCLEOTIDE SEQUENCE [LARGE SCALE GENOMIC DNA]</scope>
    <source>
        <strain>cv. Columbia</strain>
    </source>
</reference>
<reference key="2">
    <citation type="journal article" date="2017" name="Plant J.">
        <title>Araport11: a complete reannotation of the Arabidopsis thaliana reference genome.</title>
        <authorList>
            <person name="Cheng C.Y."/>
            <person name="Krishnakumar V."/>
            <person name="Chan A.P."/>
            <person name="Thibaud-Nissen F."/>
            <person name="Schobel S."/>
            <person name="Town C.D."/>
        </authorList>
    </citation>
    <scope>GENOME REANNOTATION</scope>
    <source>
        <strain>cv. Columbia</strain>
    </source>
</reference>
<reference key="3">
    <citation type="submission" date="2004-09" db="EMBL/GenBank/DDBJ databases">
        <title>Large-scale analysis of RIKEN Arabidopsis full-length (RAFL) cDNAs.</title>
        <authorList>
            <person name="Totoki Y."/>
            <person name="Seki M."/>
            <person name="Ishida J."/>
            <person name="Nakajima M."/>
            <person name="Enju A."/>
            <person name="Kamiya A."/>
            <person name="Narusaka M."/>
            <person name="Shin-i T."/>
            <person name="Nakagawa M."/>
            <person name="Sakamoto N."/>
            <person name="Oishi K."/>
            <person name="Kohara Y."/>
            <person name="Kobayashi M."/>
            <person name="Toyoda A."/>
            <person name="Sakaki Y."/>
            <person name="Sakurai T."/>
            <person name="Iida K."/>
            <person name="Akiyama K."/>
            <person name="Satou M."/>
            <person name="Toyoda T."/>
            <person name="Konagaya A."/>
            <person name="Carninci P."/>
            <person name="Kawai J."/>
            <person name="Hayashizaki Y."/>
            <person name="Shinozaki K."/>
        </authorList>
    </citation>
    <scope>NUCLEOTIDE SEQUENCE [LARGE SCALE MRNA]</scope>
    <source>
        <strain>cv. Columbia</strain>
    </source>
</reference>
<reference key="4">
    <citation type="submission" date="2006-11" db="EMBL/GenBank/DDBJ databases">
        <title>Arabidopsis ORF clones.</title>
        <authorList>
            <person name="Bautista V.R."/>
            <person name="Kim C.J."/>
            <person name="Chen H."/>
            <person name="Quinitio C."/>
            <person name="Ecker J.R."/>
        </authorList>
    </citation>
    <scope>NUCLEOTIDE SEQUENCE [LARGE SCALE MRNA]</scope>
    <source>
        <strain>cv. Columbia</strain>
    </source>
</reference>
<accession>Q67XN8</accession>
<accession>Q9SVA2</accession>
<proteinExistence type="evidence at transcript level"/>
<feature type="chain" id="PRO_0000283257" description="F-box/kelch-repeat protein At4g39560">
    <location>
        <begin position="1"/>
        <end position="266"/>
    </location>
</feature>
<feature type="domain" description="F-box" evidence="1">
    <location>
        <begin position="24"/>
        <end position="70"/>
    </location>
</feature>
<feature type="repeat" description="Kelch 1">
    <location>
        <begin position="130"/>
        <end position="176"/>
    </location>
</feature>
<feature type="repeat" description="Kelch 2">
    <location>
        <begin position="178"/>
        <end position="223"/>
    </location>
</feature>
<feature type="repeat" description="Kelch 3">
    <location>
        <begin position="226"/>
        <end position="266"/>
    </location>
</feature>
<name>FBK99_ARATH</name>
<sequence>MSSPVKKMKKKTTTSPILSPTPHSTQILSLPVDLLISILARVSRLDYPILSLVSKSFRSLIASPELYETRSLLGRTESCLYLCLGIPSDFNPRWFTLCRKPKPSGHVMAAISIPNSRPVHCSGLVAVGSDIYNIGGSIINEHSSSVSILDCRYHTWRDAPNMLVERNSHAANVIDGKIYVAGGSRDSNSSNWMEVFDIKTQTWEPVLNPIADGCDRRIRKSAVIEEAICLFGYKGVGVAYNPRIDKWEAIGEVNYLDLGWVWLLVA</sequence>
<evidence type="ECO:0000255" key="1">
    <source>
        <dbReference type="PROSITE-ProRule" id="PRU00080"/>
    </source>
</evidence>
<evidence type="ECO:0000305" key="2"/>
<gene>
    <name type="ordered locus">At4g39560</name>
    <name type="ORF">F23K16.190</name>
</gene>
<comment type="sequence caution" evidence="2">
    <conflict type="erroneous gene model prediction">
        <sequence resource="EMBL-CDS" id="CAB44691"/>
    </conflict>
</comment>
<comment type="sequence caution" evidence="2">
    <conflict type="erroneous gene model prediction">
        <sequence resource="EMBL-CDS" id="CAB80619"/>
    </conflict>
</comment>
<keyword id="KW-0880">Kelch repeat</keyword>
<keyword id="KW-1185">Reference proteome</keyword>
<keyword id="KW-0677">Repeat</keyword>